<dbReference type="EMBL" id="AF110270">
    <property type="protein sequence ID" value="AAD28185.1"/>
    <property type="molecule type" value="mRNA"/>
</dbReference>
<dbReference type="PDB" id="2K2S">
    <property type="method" value="NMR"/>
    <property type="chains" value="B=87-147"/>
</dbReference>
<dbReference type="PDB" id="2K2T">
    <property type="method" value="NMR"/>
    <property type="chains" value="A=87-147"/>
</dbReference>
<dbReference type="PDBsum" id="2K2S"/>
<dbReference type="PDBsum" id="2K2T"/>
<dbReference type="BMRB" id="Q9XYH7"/>
<dbReference type="SMR" id="Q9XYH7"/>
<dbReference type="IntAct" id="Q9XYH7">
    <property type="interactions" value="1"/>
</dbReference>
<dbReference type="MINT" id="Q9XYH7"/>
<dbReference type="TCDB" id="9.B.87.3.1">
    <property type="family name" value="the selenoprotein p receptor (selp-receptor) family"/>
</dbReference>
<dbReference type="VEuPathDB" id="ToxoDB:TGARI_218520"/>
<dbReference type="VEuPathDB" id="ToxoDB:TGCAST_218520"/>
<dbReference type="VEuPathDB" id="ToxoDB:TGCOUG_218520"/>
<dbReference type="VEuPathDB" id="ToxoDB:TGDOM2_218520"/>
<dbReference type="VEuPathDB" id="ToxoDB:TGFOU_218520"/>
<dbReference type="VEuPathDB" id="ToxoDB:TGGT1_218520"/>
<dbReference type="VEuPathDB" id="ToxoDB:TGMAS_218520"/>
<dbReference type="VEuPathDB" id="ToxoDB:TGME49_218520"/>
<dbReference type="VEuPathDB" id="ToxoDB:TGP89_218520"/>
<dbReference type="VEuPathDB" id="ToxoDB:TGPRC2_218520"/>
<dbReference type="VEuPathDB" id="ToxoDB:TGRH88_058880"/>
<dbReference type="VEuPathDB" id="ToxoDB:TGRUB_218520"/>
<dbReference type="VEuPathDB" id="ToxoDB:TGVAND_218520"/>
<dbReference type="VEuPathDB" id="ToxoDB:TGVEG_218520"/>
<dbReference type="EvolutionaryTrace" id="Q9XYH7"/>
<dbReference type="GO" id="GO:0031410">
    <property type="term" value="C:cytoplasmic vesicle"/>
    <property type="evidence" value="ECO:0007669"/>
    <property type="project" value="UniProtKB-KW"/>
</dbReference>
<dbReference type="GO" id="GO:0005576">
    <property type="term" value="C:extracellular region"/>
    <property type="evidence" value="ECO:0007669"/>
    <property type="project" value="UniProtKB-SubCell"/>
</dbReference>
<dbReference type="GO" id="GO:0020009">
    <property type="term" value="C:microneme"/>
    <property type="evidence" value="ECO:0000314"/>
    <property type="project" value="UniProtKB"/>
</dbReference>
<dbReference type="GO" id="GO:0033163">
    <property type="term" value="C:microneme membrane"/>
    <property type="evidence" value="ECO:0007669"/>
    <property type="project" value="UniProtKB-SubCell"/>
</dbReference>
<dbReference type="GO" id="GO:0005509">
    <property type="term" value="F:calcium ion binding"/>
    <property type="evidence" value="ECO:0007669"/>
    <property type="project" value="InterPro"/>
</dbReference>
<dbReference type="GO" id="GO:0007155">
    <property type="term" value="P:cell adhesion"/>
    <property type="evidence" value="ECO:0007669"/>
    <property type="project" value="UniProtKB-KW"/>
</dbReference>
<dbReference type="CDD" id="cd00054">
    <property type="entry name" value="EGF_CA"/>
    <property type="match status" value="1"/>
</dbReference>
<dbReference type="Gene3D" id="2.10.25.10">
    <property type="entry name" value="Laminin"/>
    <property type="match status" value="2"/>
</dbReference>
<dbReference type="InterPro" id="IPR001881">
    <property type="entry name" value="EGF-like_Ca-bd_dom"/>
</dbReference>
<dbReference type="InterPro" id="IPR013032">
    <property type="entry name" value="EGF-like_CS"/>
</dbReference>
<dbReference type="InterPro" id="IPR000742">
    <property type="entry name" value="EGF-like_dom"/>
</dbReference>
<dbReference type="InterPro" id="IPR000152">
    <property type="entry name" value="EGF-type_Asp/Asn_hydroxyl_site"/>
</dbReference>
<dbReference type="InterPro" id="IPR009030">
    <property type="entry name" value="Growth_fac_rcpt_cys_sf"/>
</dbReference>
<dbReference type="PANTHER" id="PTHR24039:SF58">
    <property type="entry name" value="EGF-LIKE DOMAIN-CONTAINING PROTEIN"/>
    <property type="match status" value="1"/>
</dbReference>
<dbReference type="PANTHER" id="PTHR24039">
    <property type="entry name" value="FIBRILLIN-RELATED"/>
    <property type="match status" value="1"/>
</dbReference>
<dbReference type="Pfam" id="PF12661">
    <property type="entry name" value="hEGF"/>
    <property type="match status" value="2"/>
</dbReference>
<dbReference type="SMART" id="SM00181">
    <property type="entry name" value="EGF"/>
    <property type="match status" value="3"/>
</dbReference>
<dbReference type="SMART" id="SM00179">
    <property type="entry name" value="EGF_CA"/>
    <property type="match status" value="2"/>
</dbReference>
<dbReference type="SUPFAM" id="SSF57196">
    <property type="entry name" value="EGF/Laminin"/>
    <property type="match status" value="1"/>
</dbReference>
<dbReference type="SUPFAM" id="SSF57184">
    <property type="entry name" value="Growth factor receptor domain"/>
    <property type="match status" value="1"/>
</dbReference>
<dbReference type="PROSITE" id="PS00010">
    <property type="entry name" value="ASX_HYDROXYL"/>
    <property type="match status" value="1"/>
</dbReference>
<dbReference type="PROSITE" id="PS50026">
    <property type="entry name" value="EGF_3"/>
    <property type="match status" value="2"/>
</dbReference>
<proteinExistence type="evidence at protein level"/>
<protein>
    <recommendedName>
        <fullName>Micronemal protein 6</fullName>
    </recommendedName>
</protein>
<name>MIC6_TOXGO</name>
<sequence>MRLFRCCAAAVVAAESLLWLKNGSPFFAFLPGNGEIADNCSGNPCGGTAAGTCINTPSGYDCRCEPGYVLGVENDQVTCMMPSGVPMANFVQLSETPAACSSNPCGPEAAGTCKETNSGYICRCNQGYRISLDGTGNVTCIVRQESGCEENGCGPPDAVQSCRRLTGTAGRLCVCKENFIATIDASAHITCKRVPPHYRKPPFEFGKGGHPVDSEPSKRQREDEGESREPESDSTEPGRDQERRTPLEESQEPEGSTPDSQQSRGGSGSDSTESEEQGKEREEGSGHAGAIAGGVIGGLLLLSAAGAGVAYMRKSGSGGGEEIEYERGIEAAEASEVEVLVDLDSKTWD</sequence>
<organism>
    <name type="scientific">Toxoplasma gondii</name>
    <dbReference type="NCBI Taxonomy" id="5811"/>
    <lineage>
        <taxon>Eukaryota</taxon>
        <taxon>Sar</taxon>
        <taxon>Alveolata</taxon>
        <taxon>Apicomplexa</taxon>
        <taxon>Conoidasida</taxon>
        <taxon>Coccidia</taxon>
        <taxon>Eucoccidiorida</taxon>
        <taxon>Eimeriorina</taxon>
        <taxon>Sarcocystidae</taxon>
        <taxon>Toxoplasma</taxon>
    </lineage>
</organism>
<gene>
    <name evidence="10" type="primary">MIC6</name>
</gene>
<comment type="function">
    <text evidence="4 6 7">Escorter protein required for import of MIC1 and MIC4 adhesins into the microneme.</text>
</comment>
<comment type="subunit">
    <text evidence="4 6 7">Interacts directly with MIC1. Part of the MIC6-MIC1-MIC4 complex.</text>
</comment>
<comment type="interaction">
    <interactant intactId="EBI-8078076">
        <id>Q9XYH7</id>
    </interactant>
    <interactant intactId="EBI-8078093">
        <id>O00834</id>
        <label>MIC1</label>
    </interactant>
    <organismsDiffer>false</organismsDiffer>
    <experiments>3</experiments>
</comment>
<comment type="subcellular location">
    <subcellularLocation>
        <location evidence="4 5 7 8">Cytoplasmic vesicle</location>
        <location evidence="4 5 7 8">Secretory vesicle</location>
        <location evidence="4 5 7 8">Microneme membrane</location>
        <topology evidence="4 5">Single-pass type I membrane protein</topology>
    </subcellularLocation>
    <subcellularLocation>
        <location>Secreted</location>
    </subcellularLocation>
    <text>Released as soluble 35 kDa protein after proteolytic processing of the C-terminus (PubMed:11861763).</text>
</comment>
<comment type="developmental stage">
    <text evidence="5 8">Detected in tachyzoites (at protein level) (PubMed:11861763, PubMed:28898199). Expressed in rapidly dividing tachyzoites (PubMed:11861763).</text>
</comment>
<comment type="domain">
    <text evidence="6 7">The EGF-like domains 2 and 3 and part of the acidic domain interact with the galectin-like domain of MIC1. The presence of at least one of the EGF-like domains, EGF-like domain 2 or EGF-like domain 3, is required for targeting of MIC1 and MIC4 into the microneme.</text>
</comment>
<comment type="PTM">
    <text evidence="5 8">Subject to proteolytic processing involving both the N-terminus and the C-terminus (PubMed:11861763, PubMed:28898199). The first EGF-like domain (EGF-like domain 1) is removed by proteolytic cleavage by ASP3 and is not present in the mature protein (PubMed:11861763, PubMed:28898199). Released as soluble 35 kDa protein after proteolytic processing at the C-terminus (PubMed:11861763).</text>
</comment>
<reference evidence="9 10" key="1">
    <citation type="journal article" date="2001" name="J. Cell Biol.">
        <title>Identification and characterization of an escorter for two secretory adhesins in Toxoplasma gondii.</title>
        <authorList>
            <person name="Reiss M."/>
            <person name="Viebig N."/>
            <person name="Brecht S."/>
            <person name="Fourmaux M.-N."/>
            <person name="Soete M."/>
            <person name="Di Cristina M."/>
            <person name="Dubremetz J.F."/>
            <person name="Soldati D."/>
        </authorList>
    </citation>
    <scope>NUCLEOTIDE SEQUENCE [MRNA]</scope>
    <scope>FUNCTION</scope>
    <scope>INTERACTION WITH MIC1</scope>
    <scope>SUBCELLULAR LOCATION</scope>
    <source>
        <strain evidence="10">RH</strain>
    </source>
</reference>
<reference key="2">
    <citation type="journal article" date="2002" name="J. Cell Sci.">
        <title>A family of transmembrane microneme proteins of Toxoplasma gondii contain EGF-like domains and function as escorters.</title>
        <authorList>
            <person name="Meissner M."/>
            <person name="Reiss M."/>
            <person name="Viebig N."/>
            <person name="Carruthers V.B."/>
            <person name="Toursel C."/>
            <person name="Tomavo S."/>
            <person name="Ajioka J.W."/>
            <person name="Soldati D."/>
        </authorList>
    </citation>
    <scope>SUBCELLULAR LOCATION</scope>
    <scope>MEMBRANE TOPOLOGY</scope>
    <scope>DEVELOPMENTAL STAGE</scope>
    <scope>PROTEOLYTIC PROCESSING</scope>
    <scope>CLEAVAGE SITE</scope>
    <scope>IDENTIFICATION BY MASS SPECTROMETRY</scope>
</reference>
<reference evidence="9" key="3">
    <citation type="journal article" date="2005" name="J. Biol. Chem.">
        <title>A novel galectin-like domain from Toxoplasma gondii micronemal protein 1 assists the folding, assembly, and transport of a cell adhesion complex.</title>
        <authorList>
            <person name="Saouros S."/>
            <person name="Edwards-Jones B."/>
            <person name="Reiss M."/>
            <person name="Sawmynaden K."/>
            <person name="Cota E."/>
            <person name="Simpson P."/>
            <person name="Dowse T.J."/>
            <person name="Jakle U."/>
            <person name="Ramboarina S."/>
            <person name="Shivarattan T."/>
            <person name="Matthews S."/>
            <person name="Soldati-Favre D."/>
        </authorList>
    </citation>
    <scope>FUNCTION</scope>
    <scope>INTERACTION WITH MIC1</scope>
    <scope>DOMAIN EGF-LIKE 3</scope>
</reference>
<reference key="4">
    <citation type="journal article" date="2008" name="EMBO Rep.">
        <title>Structural insights into microneme protein assembly reveal a new mode of EGF domain recognition.</title>
        <authorList>
            <person name="Sawmynaden K."/>
            <person name="Saouros S."/>
            <person name="Friedrich N."/>
            <person name="Marchant J."/>
            <person name="Simpson P."/>
            <person name="Bleijlevens B."/>
            <person name="Blackman M.J."/>
            <person name="Soldati-Favre D."/>
            <person name="Matthews S."/>
        </authorList>
    </citation>
    <scope>STRUCTURE BY NMR OF 87-174 IN COMPLEX WITH MIC1</scope>
    <scope>DOMAIN</scope>
    <scope>FUNCTION</scope>
    <scope>DISULFIDE BONDS</scope>
    <scope>SUBUNIT</scope>
    <scope>SUBCELLULAR LOCATION</scope>
</reference>
<reference evidence="9" key="5">
    <citation type="journal article" date="2017" name="Elife">
        <title>A druggable secretory protein maturase of Toxoplasma essential for invasion and egress.</title>
        <authorList>
            <person name="Dogga S.K."/>
            <person name="Mukherjee B."/>
            <person name="Jacot D."/>
            <person name="Kockmann T."/>
            <person name="Molino L."/>
            <person name="Hammoudi P.M."/>
            <person name="Hartkoorn R.C."/>
            <person name="Hehl A.B."/>
            <person name="Soldati-Favre D."/>
        </authorList>
    </citation>
    <scope>SUBCELLULAR LOCATION</scope>
    <scope>DEVELOPMENTAL STAGE</scope>
    <scope>PROTEOLYTIC CLEAVAGE</scope>
    <source>
        <strain evidence="8">RH</strain>
    </source>
</reference>
<evidence type="ECO:0000255" key="1"/>
<evidence type="ECO:0000255" key="2">
    <source>
        <dbReference type="PROSITE-ProRule" id="PRU00076"/>
    </source>
</evidence>
<evidence type="ECO:0000256" key="3">
    <source>
        <dbReference type="SAM" id="MobiDB-lite"/>
    </source>
</evidence>
<evidence type="ECO:0000269" key="4">
    <source>
    </source>
</evidence>
<evidence type="ECO:0000269" key="5">
    <source>
    </source>
</evidence>
<evidence type="ECO:0000269" key="6">
    <source>
    </source>
</evidence>
<evidence type="ECO:0000269" key="7">
    <source>
    </source>
</evidence>
<evidence type="ECO:0000269" key="8">
    <source>
    </source>
</evidence>
<evidence type="ECO:0000305" key="9"/>
<evidence type="ECO:0000312" key="10">
    <source>
        <dbReference type="EMBL" id="AAD28185.1"/>
    </source>
</evidence>
<evidence type="ECO:0007829" key="11">
    <source>
        <dbReference type="PDB" id="2K2S"/>
    </source>
</evidence>
<accession>Q9XYH7</accession>
<keyword id="KW-0002">3D-structure</keyword>
<keyword id="KW-0130">Cell adhesion</keyword>
<keyword id="KW-0968">Cytoplasmic vesicle</keyword>
<keyword id="KW-1015">Disulfide bond</keyword>
<keyword id="KW-0245">EGF-like domain</keyword>
<keyword id="KW-0472">Membrane</keyword>
<keyword id="KW-0677">Repeat</keyword>
<keyword id="KW-0964">Secreted</keyword>
<keyword id="KW-0732">Signal</keyword>
<keyword id="KW-0812">Transmembrane</keyword>
<keyword id="KW-1133">Transmembrane helix</keyword>
<keyword id="KW-0843">Virulence</keyword>
<feature type="signal peptide" evidence="1">
    <location>
        <begin position="1"/>
        <end position="23"/>
    </location>
</feature>
<feature type="chain" id="PRO_0000289155" description="Micronemal protein 6" evidence="1">
    <location>
        <begin position="24"/>
        <end position="349"/>
    </location>
</feature>
<feature type="transmembrane region" description="Helical" evidence="1">
    <location>
        <begin position="290"/>
        <end position="310"/>
    </location>
</feature>
<feature type="domain" description="EGF-like 1" evidence="2">
    <location>
        <begin position="36"/>
        <end position="80"/>
    </location>
</feature>
<feature type="domain" description="EGF-like 2" evidence="2">
    <location>
        <begin position="96"/>
        <end position="134"/>
    </location>
</feature>
<feature type="domain" description="EGF-like 3" evidence="2 4">
    <location>
        <begin position="147"/>
        <end position="192"/>
    </location>
</feature>
<feature type="region of interest" description="Disordered" evidence="3">
    <location>
        <begin position="194"/>
        <end position="291"/>
    </location>
</feature>
<feature type="region of interest" description="Acidic domain" evidence="4">
    <location>
        <begin position="204"/>
        <end position="283"/>
    </location>
</feature>
<feature type="compositionally biased region" description="Basic and acidic residues" evidence="3">
    <location>
        <begin position="210"/>
        <end position="247"/>
    </location>
</feature>
<feature type="compositionally biased region" description="Basic and acidic residues" evidence="3">
    <location>
        <begin position="276"/>
        <end position="285"/>
    </location>
</feature>
<feature type="site" description="Cleavage; by ASP3" evidence="8">
    <location>
        <begin position="94"/>
        <end position="95"/>
    </location>
</feature>
<feature type="disulfide bond" evidence="2">
    <location>
        <begin position="40"/>
        <end position="53"/>
    </location>
</feature>
<feature type="disulfide bond" evidence="2">
    <location>
        <begin position="45"/>
        <end position="62"/>
    </location>
</feature>
<feature type="disulfide bond" evidence="2">
    <location>
        <begin position="64"/>
        <end position="79"/>
    </location>
</feature>
<feature type="disulfide bond" evidence="2 7">
    <location>
        <begin position="100"/>
        <end position="113"/>
    </location>
</feature>
<feature type="disulfide bond" evidence="2 7">
    <location>
        <begin position="105"/>
        <end position="122"/>
    </location>
</feature>
<feature type="disulfide bond" evidence="2 7">
    <location>
        <begin position="124"/>
        <end position="140"/>
    </location>
</feature>
<feature type="disulfide bond" evidence="2">
    <location>
        <begin position="148"/>
        <end position="162"/>
    </location>
</feature>
<feature type="disulfide bond" evidence="2">
    <location>
        <begin position="153"/>
        <end position="173"/>
    </location>
</feature>
<feature type="disulfide bond" evidence="2">
    <location>
        <begin position="175"/>
        <end position="191"/>
    </location>
</feature>
<feature type="helix" evidence="11">
    <location>
        <begin position="99"/>
        <end position="102"/>
    </location>
</feature>
<feature type="strand" evidence="11">
    <location>
        <begin position="107"/>
        <end position="109"/>
    </location>
</feature>
<feature type="strand" evidence="11">
    <location>
        <begin position="112"/>
        <end position="115"/>
    </location>
</feature>
<feature type="strand" evidence="11">
    <location>
        <begin position="117"/>
        <end position="123"/>
    </location>
</feature>
<feature type="strand" evidence="11">
    <location>
        <begin position="128"/>
        <end position="132"/>
    </location>
</feature>
<feature type="strand" evidence="11">
    <location>
        <begin position="134"/>
        <end position="136"/>
    </location>
</feature>
<feature type="strand" evidence="11">
    <location>
        <begin position="138"/>
        <end position="145"/>
    </location>
</feature>